<reference key="1">
    <citation type="journal article" date="1987" name="FEBS Lett.">
        <title>Insect immunity: cDNA clones coding for the precursor forms of cecropins A and D, antibacterial proteins from Hyalophora cecropia.</title>
        <authorList>
            <person name="Lidholm D.-A."/>
            <person name="Gudmundsson G.H."/>
            <person name="Xanthopoulos K.G."/>
            <person name="Boman H.G."/>
        </authorList>
    </citation>
    <scope>NUCLEOTIDE SEQUENCE [MRNA]</scope>
</reference>
<reference key="2">
    <citation type="journal article" date="1991" name="J. Biol. Chem.">
        <title>The cecropin locus. Cloning and expression of a gene cluster encoding three antibacterial peptides in Hyalophora cecropia.</title>
        <authorList>
            <person name="Gudmundsson G.H."/>
            <person name="Lidholm D.-A."/>
            <person name="Aasling B."/>
            <person name="Gan R."/>
            <person name="Boman H.G."/>
        </authorList>
    </citation>
    <scope>NUCLEOTIDE SEQUENCE [GENOMIC DNA]</scope>
</reference>
<reference key="3">
    <citation type="journal article" date="1982" name="Eur. J. Biochem.">
        <title>Insect immunity: isolation and structure of cecropin D and four minor antibacterial components from Cecropia pupae.</title>
        <authorList>
            <person name="Hultmark D."/>
            <person name="Engstroem A."/>
            <person name="Bennich H."/>
            <person name="Kapur R."/>
            <person name="Boman H.G."/>
        </authorList>
    </citation>
    <scope>PROTEIN SEQUENCE OF 27-63</scope>
    <scope>AMIDATION AT LYS-63</scope>
</reference>
<reference key="4">
    <citation type="journal article" date="1981" name="Nature">
        <title>Sequence and specificity of two antibacterial proteins involved in insect immunity.</title>
        <authorList>
            <person name="Steiner H."/>
            <person name="Hultmark D."/>
            <person name="Engstroem A."/>
            <person name="Bennich H."/>
            <person name="Boman H.G."/>
        </authorList>
    </citation>
    <scope>PRELIMINARY PROTEIN SEQUENCE OF 27-63</scope>
</reference>
<reference key="5">
    <citation type="journal article" date="1988" name="Biochemistry">
        <title>The solution conformation of the antibacterial peptide cecropin A: a nuclear magnetic resonance and dynamical simulated annealing study.</title>
        <authorList>
            <person name="Holak T.A."/>
            <person name="Engstroem A."/>
            <person name="Kraulis P.J."/>
            <person name="Lindeberg G."/>
            <person name="Bennich H."/>
            <person name="Jones T.A."/>
            <person name="Gronenborn A.M."/>
            <person name="Clore G.M."/>
        </authorList>
    </citation>
    <scope>STRUCTURE BY NMR OF 27-63</scope>
</reference>
<organism>
    <name type="scientific">Hyalophora cecropia</name>
    <name type="common">Cecropia moth</name>
    <name type="synonym">Samia cecropia</name>
    <dbReference type="NCBI Taxonomy" id="7123"/>
    <lineage>
        <taxon>Eukaryota</taxon>
        <taxon>Metazoa</taxon>
        <taxon>Ecdysozoa</taxon>
        <taxon>Arthropoda</taxon>
        <taxon>Hexapoda</taxon>
        <taxon>Insecta</taxon>
        <taxon>Pterygota</taxon>
        <taxon>Neoptera</taxon>
        <taxon>Endopterygota</taxon>
        <taxon>Lepidoptera</taxon>
        <taxon>Glossata</taxon>
        <taxon>Ditrysia</taxon>
        <taxon>Bombycoidea</taxon>
        <taxon>Saturniidae</taxon>
        <taxon>Saturniinae</taxon>
        <taxon>Attacini</taxon>
        <taxon>Hyalophora</taxon>
    </lineage>
</organism>
<comment type="function">
    <text>Cecropins have lytic and antibacterial activity against several Gram-positive and Gram-negative bacteria.</text>
</comment>
<comment type="subcellular location">
    <subcellularLocation>
        <location>Secreted</location>
    </subcellularLocation>
</comment>
<comment type="PTM">
    <text evidence="1">A protein with the same sequence as cecropin A, but lacking the carboxyl blocking group, has been isolated and called cecropin C.</text>
</comment>
<comment type="similarity">
    <text evidence="2">Belongs to the cecropin family.</text>
</comment>
<dbReference type="EMBL" id="X06672">
    <property type="protein sequence ID" value="CAA29871.1"/>
    <property type="molecule type" value="mRNA"/>
</dbReference>
<dbReference type="EMBL" id="M63845">
    <property type="protein sequence ID" value="AAA29185.1"/>
    <property type="molecule type" value="Genomic_DNA"/>
</dbReference>
<dbReference type="PIR" id="A40420">
    <property type="entry name" value="CKWKA"/>
</dbReference>
<dbReference type="PDB" id="1D9J">
    <property type="method" value="NMR"/>
    <property type="chains" value="A=27-34"/>
</dbReference>
<dbReference type="PDB" id="1D9L">
    <property type="method" value="NMR"/>
    <property type="chains" value="A=27-34"/>
</dbReference>
<dbReference type="PDB" id="1D9M">
    <property type="method" value="NMR"/>
    <property type="chains" value="A=27-34"/>
</dbReference>
<dbReference type="PDB" id="1D9O">
    <property type="method" value="NMR"/>
    <property type="chains" value="A=27-34"/>
</dbReference>
<dbReference type="PDB" id="1D9P">
    <property type="method" value="NMR"/>
    <property type="chains" value="A=27-34"/>
</dbReference>
<dbReference type="PDB" id="1F0D">
    <property type="method" value="NMR"/>
    <property type="chains" value="A=27-34"/>
</dbReference>
<dbReference type="PDB" id="1F0E">
    <property type="method" value="NMR"/>
    <property type="chains" value="A=27-34"/>
</dbReference>
<dbReference type="PDB" id="1F0F">
    <property type="method" value="NMR"/>
    <property type="chains" value="A=27-34"/>
</dbReference>
<dbReference type="PDB" id="1F0G">
    <property type="method" value="NMR"/>
    <property type="chains" value="A=27-34"/>
</dbReference>
<dbReference type="PDB" id="1F0H">
    <property type="method" value="NMR"/>
    <property type="chains" value="A=27-34"/>
</dbReference>
<dbReference type="PDBsum" id="1D9J"/>
<dbReference type="PDBsum" id="1D9L"/>
<dbReference type="PDBsum" id="1D9M"/>
<dbReference type="PDBsum" id="1D9O"/>
<dbReference type="PDBsum" id="1D9P"/>
<dbReference type="PDBsum" id="1F0D"/>
<dbReference type="PDBsum" id="1F0E"/>
<dbReference type="PDBsum" id="1F0F"/>
<dbReference type="PDBsum" id="1F0G"/>
<dbReference type="PDBsum" id="1F0H"/>
<dbReference type="BMRB" id="P01507"/>
<dbReference type="SMR" id="P01507"/>
<dbReference type="TCDB" id="1.C.17.1.1">
    <property type="family name" value="the cecropin (cecropin) family"/>
</dbReference>
<dbReference type="GO" id="GO:0005576">
    <property type="term" value="C:extracellular region"/>
    <property type="evidence" value="ECO:0007669"/>
    <property type="project" value="UniProtKB-SubCell"/>
</dbReference>
<dbReference type="GO" id="GO:0019731">
    <property type="term" value="P:antibacterial humoral response"/>
    <property type="evidence" value="ECO:0007669"/>
    <property type="project" value="InterPro"/>
</dbReference>
<dbReference type="GO" id="GO:0050830">
    <property type="term" value="P:defense response to Gram-positive bacterium"/>
    <property type="evidence" value="ECO:0007669"/>
    <property type="project" value="UniProtKB-ARBA"/>
</dbReference>
<dbReference type="GO" id="GO:0045087">
    <property type="term" value="P:innate immune response"/>
    <property type="evidence" value="ECO:0007669"/>
    <property type="project" value="UniProtKB-KW"/>
</dbReference>
<dbReference type="InterPro" id="IPR000875">
    <property type="entry name" value="Cecropin"/>
</dbReference>
<dbReference type="Pfam" id="PF00272">
    <property type="entry name" value="Cecropin"/>
    <property type="match status" value="1"/>
</dbReference>
<dbReference type="PROSITE" id="PS00268">
    <property type="entry name" value="CECROPIN"/>
    <property type="match status" value="1"/>
</dbReference>
<proteinExistence type="evidence at protein level"/>
<protein>
    <recommendedName>
        <fullName>Cecropin-A</fullName>
    </recommendedName>
    <alternativeName>
        <fullName>Cecropin-C</fullName>
    </alternativeName>
</protein>
<accession>P01507</accession>
<feature type="signal peptide">
    <location>
        <begin position="1"/>
        <end position="22"/>
    </location>
</feature>
<feature type="propeptide" id="PRO_0000004859" description="Removed by a dipeptidylpeptidase" evidence="1">
    <location>
        <begin position="23"/>
        <end position="26"/>
    </location>
</feature>
<feature type="chain" id="PRO_0000004860" description="Cecropin-A">
    <location>
        <begin position="27"/>
        <end position="63"/>
    </location>
</feature>
<feature type="modified residue" description="Lysine amide" evidence="1">
    <location>
        <position position="63"/>
    </location>
</feature>
<feature type="helix" evidence="3">
    <location>
        <begin position="29"/>
        <end position="33"/>
    </location>
</feature>
<evidence type="ECO:0000269" key="1">
    <source>
    </source>
</evidence>
<evidence type="ECO:0000305" key="2"/>
<evidence type="ECO:0007829" key="3">
    <source>
        <dbReference type="PDB" id="1D9J"/>
    </source>
</evidence>
<sequence>MNFSRIFFFVFACLTALAMVNAAPEPKWKLFKKIEKVGQNIRDGIIKAGPAVAVVGQATQIAKG</sequence>
<keyword id="KW-0002">3D-structure</keyword>
<keyword id="KW-0027">Amidation</keyword>
<keyword id="KW-0044">Antibiotic</keyword>
<keyword id="KW-0929">Antimicrobial</keyword>
<keyword id="KW-0903">Direct protein sequencing</keyword>
<keyword id="KW-0391">Immunity</keyword>
<keyword id="KW-0399">Innate immunity</keyword>
<keyword id="KW-0964">Secreted</keyword>
<keyword id="KW-0732">Signal</keyword>
<name>CECA_HYACE</name>